<dbReference type="EC" id="2.3.2.27" evidence="1"/>
<dbReference type="EMBL" id="AB026655">
    <property type="protein sequence ID" value="BAB02097.1"/>
    <property type="molecule type" value="Genomic_DNA"/>
</dbReference>
<dbReference type="EMBL" id="CP002686">
    <property type="protein sequence ID" value="AEE76711.1"/>
    <property type="molecule type" value="Genomic_DNA"/>
</dbReference>
<dbReference type="EMBL" id="AY099845">
    <property type="protein sequence ID" value="AAM20696.1"/>
    <property type="molecule type" value="mRNA"/>
</dbReference>
<dbReference type="EMBL" id="BT006623">
    <property type="protein sequence ID" value="AAP31967.1"/>
    <property type="molecule type" value="mRNA"/>
</dbReference>
<dbReference type="RefSeq" id="NP_188946.2">
    <property type="nucleotide sequence ID" value="NM_113206.5"/>
</dbReference>
<dbReference type="SMR" id="Q9LS86"/>
<dbReference type="BioGRID" id="7212">
    <property type="interactions" value="6"/>
</dbReference>
<dbReference type="IntAct" id="Q9LS86">
    <property type="interactions" value="6"/>
</dbReference>
<dbReference type="STRING" id="3702.Q9LS86"/>
<dbReference type="iPTMnet" id="Q9LS86"/>
<dbReference type="PaxDb" id="3702-AT3G23060.1"/>
<dbReference type="ProteomicsDB" id="224306"/>
<dbReference type="EnsemblPlants" id="AT3G23060.1">
    <property type="protein sequence ID" value="AT3G23060.1"/>
    <property type="gene ID" value="AT3G23060"/>
</dbReference>
<dbReference type="GeneID" id="821880"/>
<dbReference type="Gramene" id="AT3G23060.1">
    <property type="protein sequence ID" value="AT3G23060.1"/>
    <property type="gene ID" value="AT3G23060"/>
</dbReference>
<dbReference type="KEGG" id="ath:AT3G23060"/>
<dbReference type="Araport" id="AT3G23060"/>
<dbReference type="TAIR" id="AT3G23060">
    <property type="gene designation" value="ATBM1C"/>
</dbReference>
<dbReference type="eggNOG" id="KOG2660">
    <property type="taxonomic scope" value="Eukaryota"/>
</dbReference>
<dbReference type="HOGENOM" id="CLU_039235_1_0_1"/>
<dbReference type="InParanoid" id="Q9LS86"/>
<dbReference type="OMA" id="NAYIRTD"/>
<dbReference type="PhylomeDB" id="Q9LS86"/>
<dbReference type="UniPathway" id="UPA00143"/>
<dbReference type="PRO" id="PR:Q9LS86"/>
<dbReference type="Proteomes" id="UP000006548">
    <property type="component" value="Chromosome 3"/>
</dbReference>
<dbReference type="ExpressionAtlas" id="Q9LS86">
    <property type="expression patterns" value="baseline and differential"/>
</dbReference>
<dbReference type="GO" id="GO:0004842">
    <property type="term" value="F:ubiquitin-protein transferase activity"/>
    <property type="evidence" value="ECO:0007669"/>
    <property type="project" value="InterPro"/>
</dbReference>
<dbReference type="GO" id="GO:0008270">
    <property type="term" value="F:zinc ion binding"/>
    <property type="evidence" value="ECO:0007669"/>
    <property type="project" value="UniProtKB-KW"/>
</dbReference>
<dbReference type="GO" id="GO:0016567">
    <property type="term" value="P:protein ubiquitination"/>
    <property type="evidence" value="ECO:0007669"/>
    <property type="project" value="UniProtKB-UniPathway"/>
</dbReference>
<dbReference type="CDD" id="cd17087">
    <property type="entry name" value="RAWUL_DRIP_like"/>
    <property type="match status" value="1"/>
</dbReference>
<dbReference type="Gene3D" id="3.10.20.90">
    <property type="entry name" value="Phosphatidylinositol 3-kinase Catalytic Subunit, Chain A, domain 1"/>
    <property type="match status" value="1"/>
</dbReference>
<dbReference type="Gene3D" id="3.30.40.10">
    <property type="entry name" value="Zinc/RING finger domain, C3HC4 (zinc finger)"/>
    <property type="match status" value="1"/>
</dbReference>
<dbReference type="InterPro" id="IPR044768">
    <property type="entry name" value="DRIP-like_RAWUL"/>
</dbReference>
<dbReference type="InterPro" id="IPR044807">
    <property type="entry name" value="DRIP1-like"/>
</dbReference>
<dbReference type="InterPro" id="IPR018957">
    <property type="entry name" value="Znf_C3HC4_RING-type"/>
</dbReference>
<dbReference type="InterPro" id="IPR001841">
    <property type="entry name" value="Znf_RING"/>
</dbReference>
<dbReference type="InterPro" id="IPR013083">
    <property type="entry name" value="Znf_RING/FYVE/PHD"/>
</dbReference>
<dbReference type="InterPro" id="IPR017907">
    <property type="entry name" value="Znf_RING_CS"/>
</dbReference>
<dbReference type="PANTHER" id="PTHR46293">
    <property type="entry name" value="E3 UBIQUITIN PROTEIN LIGASE DRIP1"/>
    <property type="match status" value="1"/>
</dbReference>
<dbReference type="PANTHER" id="PTHR46293:SF3">
    <property type="entry name" value="E3 UBIQUITIN PROTEIN LIGASE DRIPH-RELATED"/>
    <property type="match status" value="1"/>
</dbReference>
<dbReference type="Pfam" id="PF00097">
    <property type="entry name" value="zf-C3HC4"/>
    <property type="match status" value="1"/>
</dbReference>
<dbReference type="SMART" id="SM00184">
    <property type="entry name" value="RING"/>
    <property type="match status" value="1"/>
</dbReference>
<dbReference type="SUPFAM" id="SSF57850">
    <property type="entry name" value="RING/U-box"/>
    <property type="match status" value="1"/>
</dbReference>
<dbReference type="PROSITE" id="PS00518">
    <property type="entry name" value="ZF_RING_1"/>
    <property type="match status" value="1"/>
</dbReference>
<dbReference type="PROSITE" id="PS50089">
    <property type="entry name" value="ZF_RING_2"/>
    <property type="match status" value="1"/>
</dbReference>
<sequence length="480" mass="53664">MLTKVLSKEVKPCLACPICTNPFKDATTISECLHTFCRSCIRNKFINERVNACPVCNVNLGVFPLEKLRSDCTWQDLKLKIYRAMMESLKKAGPKTVAASVKSSKKKRKSRTSLRVSSSRVSSSPDTPLEPANVVVEPPNVVVEEKHRETVLALQSTRKPIITFQKRGRKASLPKKIDSKPEPELPPKEPKIKNLFDLNNEPEDNGLDEAEGSTFQEVVPKEKDLCKPIFSLSVTLNINDTPPDIVEPEISSDDDTEESVEPIQNKCVVNRETKEVPVQVNQNSLLISSDRDREDNSGQKLKTNGAATSRSRKKKGKKPVEKSYSLRPRIGRRTVNPAAGTTTPEAPVSVEEEMKVEEGRNNNPVWFSLKPSKTQNIEMLLPPITACCIRVKDSNMTVSYLKKYLMVKLGLESEDQVEIWLRDEPVCSSLTLHNLVDWWVQTTPLPERQSAMVGSSAAEFIMDLYYSFKSDASDSGSASE</sequence>
<reference key="1">
    <citation type="journal article" date="2000" name="DNA Res.">
        <title>Structural analysis of Arabidopsis thaliana chromosome 3. I. Sequence features of the regions of 4,504,864 bp covered by sixty P1 and TAC clones.</title>
        <authorList>
            <person name="Sato S."/>
            <person name="Nakamura Y."/>
            <person name="Kaneko T."/>
            <person name="Katoh T."/>
            <person name="Asamizu E."/>
            <person name="Tabata S."/>
        </authorList>
    </citation>
    <scope>NUCLEOTIDE SEQUENCE [LARGE SCALE GENOMIC DNA]</scope>
    <source>
        <strain>cv. Columbia</strain>
    </source>
</reference>
<reference key="2">
    <citation type="journal article" date="2017" name="Plant J.">
        <title>Araport11: a complete reannotation of the Arabidopsis thaliana reference genome.</title>
        <authorList>
            <person name="Cheng C.Y."/>
            <person name="Krishnakumar V."/>
            <person name="Chan A.P."/>
            <person name="Thibaud-Nissen F."/>
            <person name="Schobel S."/>
            <person name="Town C.D."/>
        </authorList>
    </citation>
    <scope>GENOME REANNOTATION</scope>
    <source>
        <strain>cv. Columbia</strain>
    </source>
</reference>
<reference key="3">
    <citation type="journal article" date="2003" name="Science">
        <title>Empirical analysis of transcriptional activity in the Arabidopsis genome.</title>
        <authorList>
            <person name="Yamada K."/>
            <person name="Lim J."/>
            <person name="Dale J.M."/>
            <person name="Chen H."/>
            <person name="Shinn P."/>
            <person name="Palm C.J."/>
            <person name="Southwick A.M."/>
            <person name="Wu H.C."/>
            <person name="Kim C.J."/>
            <person name="Nguyen M."/>
            <person name="Pham P.K."/>
            <person name="Cheuk R.F."/>
            <person name="Karlin-Newmann G."/>
            <person name="Liu S.X."/>
            <person name="Lam B."/>
            <person name="Sakano H."/>
            <person name="Wu T."/>
            <person name="Yu G."/>
            <person name="Miranda M."/>
            <person name="Quach H.L."/>
            <person name="Tripp M."/>
            <person name="Chang C.H."/>
            <person name="Lee J.M."/>
            <person name="Toriumi M.J."/>
            <person name="Chan M.M."/>
            <person name="Tang C.C."/>
            <person name="Onodera C.S."/>
            <person name="Deng J.M."/>
            <person name="Akiyama K."/>
            <person name="Ansari Y."/>
            <person name="Arakawa T."/>
            <person name="Banh J."/>
            <person name="Banno F."/>
            <person name="Bowser L."/>
            <person name="Brooks S.Y."/>
            <person name="Carninci P."/>
            <person name="Chao Q."/>
            <person name="Choy N."/>
            <person name="Enju A."/>
            <person name="Goldsmith A.D."/>
            <person name="Gurjal M."/>
            <person name="Hansen N.F."/>
            <person name="Hayashizaki Y."/>
            <person name="Johnson-Hopson C."/>
            <person name="Hsuan V.W."/>
            <person name="Iida K."/>
            <person name="Karnes M."/>
            <person name="Khan S."/>
            <person name="Koesema E."/>
            <person name="Ishida J."/>
            <person name="Jiang P.X."/>
            <person name="Jones T."/>
            <person name="Kawai J."/>
            <person name="Kamiya A."/>
            <person name="Meyers C."/>
            <person name="Nakajima M."/>
            <person name="Narusaka M."/>
            <person name="Seki M."/>
            <person name="Sakurai T."/>
            <person name="Satou M."/>
            <person name="Tamse R."/>
            <person name="Vaysberg M."/>
            <person name="Wallender E.K."/>
            <person name="Wong C."/>
            <person name="Yamamura Y."/>
            <person name="Yuan S."/>
            <person name="Shinozaki K."/>
            <person name="Davis R.W."/>
            <person name="Theologis A."/>
            <person name="Ecker J.R."/>
        </authorList>
    </citation>
    <scope>NUCLEOTIDE SEQUENCE [LARGE SCALE MRNA]</scope>
    <source>
        <strain>cv. Columbia</strain>
    </source>
</reference>
<organism>
    <name type="scientific">Arabidopsis thaliana</name>
    <name type="common">Mouse-ear cress</name>
    <dbReference type="NCBI Taxonomy" id="3702"/>
    <lineage>
        <taxon>Eukaryota</taxon>
        <taxon>Viridiplantae</taxon>
        <taxon>Streptophyta</taxon>
        <taxon>Embryophyta</taxon>
        <taxon>Tracheophyta</taxon>
        <taxon>Spermatophyta</taxon>
        <taxon>Magnoliopsida</taxon>
        <taxon>eudicotyledons</taxon>
        <taxon>Gunneridae</taxon>
        <taxon>Pentapetalae</taxon>
        <taxon>rosids</taxon>
        <taxon>malvids</taxon>
        <taxon>Brassicales</taxon>
        <taxon>Brassicaceae</taxon>
        <taxon>Camelineae</taxon>
        <taxon>Arabidopsis</taxon>
    </lineage>
</organism>
<evidence type="ECO:0000250" key="1">
    <source>
        <dbReference type="UniProtKB" id="Q9M9Y4"/>
    </source>
</evidence>
<evidence type="ECO:0000255" key="2">
    <source>
        <dbReference type="PROSITE-ProRule" id="PRU00175"/>
    </source>
</evidence>
<evidence type="ECO:0000256" key="3">
    <source>
        <dbReference type="SAM" id="MobiDB-lite"/>
    </source>
</evidence>
<evidence type="ECO:0000305" key="4"/>
<proteinExistence type="evidence at protein level"/>
<keyword id="KW-0479">Metal-binding</keyword>
<keyword id="KW-1185">Reference proteome</keyword>
<keyword id="KW-0808">Transferase</keyword>
<keyword id="KW-0833">Ubl conjugation pathway</keyword>
<keyword id="KW-0862">Zinc</keyword>
<keyword id="KW-0863">Zinc-finger</keyword>
<feature type="chain" id="PRO_0000397044" description="Probable E3 ubiquitin protein ligase DRIPH">
    <location>
        <begin position="1"/>
        <end position="480"/>
    </location>
</feature>
<feature type="zinc finger region" description="RING-type" evidence="2">
    <location>
        <begin position="16"/>
        <end position="57"/>
    </location>
</feature>
<feature type="region of interest" description="Disordered" evidence="3">
    <location>
        <begin position="93"/>
        <end position="133"/>
    </location>
</feature>
<feature type="region of interest" description="Disordered" evidence="3">
    <location>
        <begin position="167"/>
        <end position="193"/>
    </location>
</feature>
<feature type="region of interest" description="Disordered" evidence="3">
    <location>
        <begin position="241"/>
        <end position="261"/>
    </location>
</feature>
<feature type="region of interest" description="Disordered" evidence="3">
    <location>
        <begin position="280"/>
        <end position="356"/>
    </location>
</feature>
<feature type="compositionally biased region" description="Basic residues" evidence="3">
    <location>
        <begin position="103"/>
        <end position="112"/>
    </location>
</feature>
<feature type="compositionally biased region" description="Low complexity" evidence="3">
    <location>
        <begin position="113"/>
        <end position="133"/>
    </location>
</feature>
<feature type="compositionally biased region" description="Basic and acidic residues" evidence="3">
    <location>
        <begin position="175"/>
        <end position="193"/>
    </location>
</feature>
<feature type="compositionally biased region" description="Acidic residues" evidence="3">
    <location>
        <begin position="246"/>
        <end position="260"/>
    </location>
</feature>
<feature type="compositionally biased region" description="Polar residues" evidence="3">
    <location>
        <begin position="298"/>
        <end position="309"/>
    </location>
</feature>
<gene>
    <name type="ordered locus">At3g23060</name>
    <name type="ORF">MXC7.9</name>
</gene>
<accession>Q9LS86</accession>
<protein>
    <recommendedName>
        <fullName>Probable E3 ubiquitin protein ligase DRIPH</fullName>
        <ecNumber evidence="1">2.3.2.27</ecNumber>
    </recommendedName>
    <alternativeName>
        <fullName>DREB2A-interacting protein homolog</fullName>
    </alternativeName>
    <alternativeName>
        <fullName evidence="4">RING-type E3 ubiquitin transferase DRIPH</fullName>
    </alternativeName>
</protein>
<name>DRIPH_ARATH</name>
<comment type="catalytic activity">
    <reaction evidence="1">
        <text>S-ubiquitinyl-[E2 ubiquitin-conjugating enzyme]-L-cysteine + [acceptor protein]-L-lysine = [E2 ubiquitin-conjugating enzyme]-L-cysteine + N(6)-ubiquitinyl-[acceptor protein]-L-lysine.</text>
        <dbReference type="EC" id="2.3.2.27"/>
    </reaction>
</comment>
<comment type="pathway">
    <text>Protein modification; protein ubiquitination.</text>
</comment>
<comment type="interaction">
    <interactant intactId="EBI-4445671">
        <id>Q9LS86</id>
    </interactant>
    <interactant intactId="EBI-617095">
        <id>Q9LEZ3</id>
        <label>BIM1</label>
    </interactant>
    <organismsDiffer>false</organismsDiffer>
    <experiments>3</experiments>
</comment>